<dbReference type="EMBL" id="CP001598">
    <property type="protein sequence ID" value="ACQ45941.1"/>
    <property type="molecule type" value="Genomic_DNA"/>
</dbReference>
<dbReference type="RefSeq" id="WP_000868344.1">
    <property type="nucleotide sequence ID" value="NC_012659.1"/>
</dbReference>
<dbReference type="SMR" id="C3P9S9"/>
<dbReference type="GeneID" id="97822099"/>
<dbReference type="KEGG" id="bai:BAA_0150"/>
<dbReference type="HOGENOM" id="CLU_135723_6_2_9"/>
<dbReference type="GO" id="GO:0005737">
    <property type="term" value="C:cytoplasm"/>
    <property type="evidence" value="ECO:0007669"/>
    <property type="project" value="UniProtKB-ARBA"/>
</dbReference>
<dbReference type="GO" id="GO:1990904">
    <property type="term" value="C:ribonucleoprotein complex"/>
    <property type="evidence" value="ECO:0007669"/>
    <property type="project" value="UniProtKB-KW"/>
</dbReference>
<dbReference type="GO" id="GO:0005840">
    <property type="term" value="C:ribosome"/>
    <property type="evidence" value="ECO:0007669"/>
    <property type="project" value="UniProtKB-KW"/>
</dbReference>
<dbReference type="GO" id="GO:0003735">
    <property type="term" value="F:structural constituent of ribosome"/>
    <property type="evidence" value="ECO:0007669"/>
    <property type="project" value="InterPro"/>
</dbReference>
<dbReference type="GO" id="GO:0006412">
    <property type="term" value="P:translation"/>
    <property type="evidence" value="ECO:0007669"/>
    <property type="project" value="UniProtKB-UniRule"/>
</dbReference>
<dbReference type="HAMAP" id="MF_00251">
    <property type="entry name" value="Ribosomal_bL36"/>
    <property type="match status" value="1"/>
</dbReference>
<dbReference type="InterPro" id="IPR000473">
    <property type="entry name" value="Ribosomal_bL36"/>
</dbReference>
<dbReference type="InterPro" id="IPR035977">
    <property type="entry name" value="Ribosomal_bL36_sp"/>
</dbReference>
<dbReference type="NCBIfam" id="TIGR01022">
    <property type="entry name" value="rpmJ_bact"/>
    <property type="match status" value="1"/>
</dbReference>
<dbReference type="PANTHER" id="PTHR42888">
    <property type="entry name" value="50S RIBOSOMAL PROTEIN L36, CHLOROPLASTIC"/>
    <property type="match status" value="1"/>
</dbReference>
<dbReference type="PANTHER" id="PTHR42888:SF1">
    <property type="entry name" value="LARGE RIBOSOMAL SUBUNIT PROTEIN BL36C"/>
    <property type="match status" value="1"/>
</dbReference>
<dbReference type="Pfam" id="PF00444">
    <property type="entry name" value="Ribosomal_L36"/>
    <property type="match status" value="1"/>
</dbReference>
<dbReference type="SUPFAM" id="SSF57840">
    <property type="entry name" value="Ribosomal protein L36"/>
    <property type="match status" value="1"/>
</dbReference>
<dbReference type="PROSITE" id="PS00828">
    <property type="entry name" value="RIBOSOMAL_L36"/>
    <property type="match status" value="1"/>
</dbReference>
<organism>
    <name type="scientific">Bacillus anthracis (strain A0248)</name>
    <dbReference type="NCBI Taxonomy" id="592021"/>
    <lineage>
        <taxon>Bacteria</taxon>
        <taxon>Bacillati</taxon>
        <taxon>Bacillota</taxon>
        <taxon>Bacilli</taxon>
        <taxon>Bacillales</taxon>
        <taxon>Bacillaceae</taxon>
        <taxon>Bacillus</taxon>
        <taxon>Bacillus cereus group</taxon>
    </lineage>
</organism>
<accession>C3P9S9</accession>
<sequence length="37" mass="4333">MKVRPSVKPICEKCKVIRRRGKVMVICENPKHKQKQG</sequence>
<keyword id="KW-0687">Ribonucleoprotein</keyword>
<keyword id="KW-0689">Ribosomal protein</keyword>
<comment type="similarity">
    <text evidence="1">Belongs to the bacterial ribosomal protein bL36 family.</text>
</comment>
<reference key="1">
    <citation type="submission" date="2009-04" db="EMBL/GenBank/DDBJ databases">
        <title>Genome sequence of Bacillus anthracis A0248.</title>
        <authorList>
            <person name="Dodson R.J."/>
            <person name="Munk A.C."/>
            <person name="Bruce D."/>
            <person name="Detter C."/>
            <person name="Tapia R."/>
            <person name="Sutton G."/>
            <person name="Sims D."/>
            <person name="Brettin T."/>
        </authorList>
    </citation>
    <scope>NUCLEOTIDE SEQUENCE [LARGE SCALE GENOMIC DNA]</scope>
    <source>
        <strain>A0248</strain>
    </source>
</reference>
<name>RL36_BACAA</name>
<evidence type="ECO:0000255" key="1">
    <source>
        <dbReference type="HAMAP-Rule" id="MF_00251"/>
    </source>
</evidence>
<evidence type="ECO:0000305" key="2"/>
<protein>
    <recommendedName>
        <fullName evidence="1">Large ribosomal subunit protein bL36</fullName>
    </recommendedName>
    <alternativeName>
        <fullName evidence="2">50S ribosomal protein L36</fullName>
    </alternativeName>
</protein>
<proteinExistence type="inferred from homology"/>
<gene>
    <name evidence="1" type="primary">rpmJ</name>
    <name type="ordered locus">BAA_0150</name>
</gene>
<feature type="chain" id="PRO_1000196161" description="Large ribosomal subunit protein bL36">
    <location>
        <begin position="1"/>
        <end position="37"/>
    </location>
</feature>